<gene>
    <name type="primary">SLC25A45</name>
</gene>
<sequence>MPVEEFVAGWISGALGLVLGHPFDTVKVRLQTQTTYRGIVDCMVKIYRHESLLGFFKGMSFPIASIAVVNSVLFGVYSNTLLVLTATSHQERRAQPPSYMHIFLAGCTGGFLQAYCLAPFDLIKVRLQNQTEPRAQPGSPPPRYQGPVHCAASIFREEGPRGLFRGAWALTLRDTPTVGIYFITYEGLCRQYTPEGQNPSSATVLVAGGFAGIASWVAATPLDMIKSRMQMDGLRRRVYQGMLDCMVSSIRQEGLGVFFRGVTINSARAFPVNAVTFLSYEYLLRWWG</sequence>
<keyword id="KW-0025">Alternative splicing</keyword>
<keyword id="KW-0472">Membrane</keyword>
<keyword id="KW-0496">Mitochondrion</keyword>
<keyword id="KW-0999">Mitochondrion inner membrane</keyword>
<keyword id="KW-1267">Proteomics identification</keyword>
<keyword id="KW-1185">Reference proteome</keyword>
<keyword id="KW-0677">Repeat</keyword>
<keyword id="KW-0812">Transmembrane</keyword>
<keyword id="KW-1133">Transmembrane helix</keyword>
<keyword id="KW-0813">Transport</keyword>
<feature type="chain" id="PRO_0000291826" description="Solute carrier family 25 member 45">
    <location>
        <begin position="1"/>
        <end position="288"/>
    </location>
</feature>
<feature type="transmembrane region" description="Helical; Name=1" evidence="2">
    <location>
        <begin position="6"/>
        <end position="26"/>
    </location>
</feature>
<feature type="transmembrane region" description="Helical; Name=2" evidence="2">
    <location>
        <begin position="63"/>
        <end position="83"/>
    </location>
</feature>
<feature type="transmembrane region" description="Helical; Name=3" evidence="2">
    <location>
        <begin position="100"/>
        <end position="120"/>
    </location>
</feature>
<feature type="transmembrane region" description="Helical; Name=4" evidence="2">
    <location>
        <begin position="166"/>
        <end position="186"/>
    </location>
</feature>
<feature type="transmembrane region" description="Helical; Name=5" evidence="2">
    <location>
        <begin position="202"/>
        <end position="222"/>
    </location>
</feature>
<feature type="transmembrane region" description="Helical; Name=6" evidence="2">
    <location>
        <begin position="266"/>
        <end position="286"/>
    </location>
</feature>
<feature type="repeat" description="Solcar 1">
    <location>
        <begin position="1"/>
        <end position="83"/>
    </location>
</feature>
<feature type="repeat" description="Solcar 2">
    <location>
        <begin position="97"/>
        <end position="191"/>
    </location>
</feature>
<feature type="repeat" description="Solcar 3">
    <location>
        <begin position="199"/>
        <end position="286"/>
    </location>
</feature>
<feature type="splice variant" id="VSP_026246" description="In isoform 2 and isoform 3." evidence="5 6">
    <location>
        <begin position="1"/>
        <end position="42"/>
    </location>
</feature>
<feature type="splice variant" id="VSP_026247" description="In isoform 4." evidence="5">
    <location>
        <begin position="28"/>
        <end position="51"/>
    </location>
</feature>
<feature type="splice variant" id="VSP_026248" description="In isoform 3." evidence="6">
    <location>
        <begin position="52"/>
        <end position="113"/>
    </location>
</feature>
<feature type="sequence variant" id="VAR_032866" description="In dbSNP:rs624307." evidence="3 4">
    <original>M</original>
    <variation>V</variation>
    <location>
        <position position="224"/>
    </location>
</feature>
<feature type="sequence variant" id="VAR_050135" description="In dbSNP:rs7108281.">
    <original>R</original>
    <variation>Q</variation>
    <location>
        <position position="251"/>
    </location>
</feature>
<feature type="sequence conflict" description="In Ref. 1; AAT09000." evidence="7" ref="1">
    <original>S</original>
    <variation>P</variation>
    <location>
        <position position="153"/>
    </location>
</feature>
<proteinExistence type="evidence at protein level"/>
<protein>
    <recommendedName>
        <fullName>Solute carrier family 25 member 45</fullName>
    </recommendedName>
</protein>
<organism>
    <name type="scientific">Homo sapiens</name>
    <name type="common">Human</name>
    <dbReference type="NCBI Taxonomy" id="9606"/>
    <lineage>
        <taxon>Eukaryota</taxon>
        <taxon>Metazoa</taxon>
        <taxon>Chordata</taxon>
        <taxon>Craniata</taxon>
        <taxon>Vertebrata</taxon>
        <taxon>Euteleostomi</taxon>
        <taxon>Mammalia</taxon>
        <taxon>Eutheria</taxon>
        <taxon>Euarchontoglires</taxon>
        <taxon>Primates</taxon>
        <taxon>Haplorrhini</taxon>
        <taxon>Catarrhini</taxon>
        <taxon>Hominidae</taxon>
        <taxon>Homo</taxon>
    </lineage>
</organism>
<evidence type="ECO:0000250" key="1"/>
<evidence type="ECO:0000255" key="2"/>
<evidence type="ECO:0000269" key="3">
    <source>
    </source>
</evidence>
<evidence type="ECO:0000269" key="4">
    <source ref="1"/>
</evidence>
<evidence type="ECO:0000303" key="5">
    <source>
    </source>
</evidence>
<evidence type="ECO:0000303" key="6">
    <source ref="1"/>
</evidence>
<evidence type="ECO:0000305" key="7"/>
<comment type="subcellular location">
    <subcellularLocation>
        <location evidence="1">Mitochondrion inner membrane</location>
        <topology evidence="1">Multi-pass membrane protein</topology>
    </subcellularLocation>
</comment>
<comment type="alternative products">
    <event type="alternative splicing"/>
    <isoform>
        <id>Q8N413-1</id>
        <name>1</name>
        <sequence type="displayed"/>
    </isoform>
    <isoform>
        <id>Q8N413-2</id>
        <name>2</name>
        <sequence type="described" ref="VSP_026246"/>
    </isoform>
    <isoform>
        <id>Q8N413-3</id>
        <name>3</name>
        <sequence type="described" ref="VSP_026246 VSP_026248"/>
    </isoform>
    <isoform>
        <id>Q8N413-4</id>
        <name>4</name>
        <sequence type="described" ref="VSP_026247"/>
    </isoform>
</comment>
<comment type="similarity">
    <text evidence="7">Belongs to the mitochondrial carrier (TC 2.A.29) family.</text>
</comment>
<comment type="sequence caution" evidence="7">
    <molecule>Isoform 4</molecule>
    <conflict type="frameshift">
        <sequence resource="EMBL" id="BC041100"/>
    </conflict>
</comment>
<dbReference type="EMBL" id="AY597807">
    <property type="protein sequence ID" value="AAT09000.1"/>
    <property type="molecule type" value="mRNA"/>
</dbReference>
<dbReference type="EMBL" id="AP000944">
    <property type="status" value="NOT_ANNOTATED_CDS"/>
    <property type="molecule type" value="Genomic_DNA"/>
</dbReference>
<dbReference type="EMBL" id="BC036869">
    <property type="protein sequence ID" value="AAH36869.1"/>
    <property type="molecule type" value="mRNA"/>
</dbReference>
<dbReference type="EMBL" id="BC041100">
    <property type="status" value="NOT_ANNOTATED_CDS"/>
    <property type="molecule type" value="mRNA"/>
</dbReference>
<dbReference type="CCDS" id="CCDS41670.1">
    <molecule id="Q8N413-1"/>
</dbReference>
<dbReference type="CCDS" id="CCDS41671.1">
    <molecule id="Q8N413-2"/>
</dbReference>
<dbReference type="CCDS" id="CCDS60850.1">
    <molecule id="Q8N413-4"/>
</dbReference>
<dbReference type="RefSeq" id="NP_001070709.3">
    <molecule id="Q8N413-2"/>
    <property type="nucleotide sequence ID" value="NM_001077241.3"/>
</dbReference>
<dbReference type="RefSeq" id="NP_001265179.3">
    <molecule id="Q8N413-4"/>
    <property type="nucleotide sequence ID" value="NM_001278250.3"/>
</dbReference>
<dbReference type="RefSeq" id="NP_001265180.3">
    <molecule id="Q8N413-2"/>
    <property type="nucleotide sequence ID" value="NM_001278251.3"/>
</dbReference>
<dbReference type="RefSeq" id="NP_001287749.1">
    <property type="nucleotide sequence ID" value="NM_001300820.1"/>
</dbReference>
<dbReference type="RefSeq" id="NP_001339310.2">
    <molecule id="Q8N413-1"/>
    <property type="nucleotide sequence ID" value="NM_001352381.2"/>
</dbReference>
<dbReference type="RefSeq" id="NP_001339311.2">
    <molecule id="Q8N413-2"/>
    <property type="nucleotide sequence ID" value="NM_001352382.2"/>
</dbReference>
<dbReference type="RefSeq" id="NP_001339312.2">
    <molecule id="Q8N413-3"/>
    <property type="nucleotide sequence ID" value="NM_001352383.2"/>
</dbReference>
<dbReference type="RefSeq" id="NP_001339313.2">
    <molecule id="Q8N413-3"/>
    <property type="nucleotide sequence ID" value="NM_001352384.2"/>
</dbReference>
<dbReference type="RefSeq" id="NP_872362.4">
    <molecule id="Q8N413-1"/>
    <property type="nucleotide sequence ID" value="NM_182556.4"/>
</dbReference>
<dbReference type="RefSeq" id="XP_006718572.1">
    <property type="nucleotide sequence ID" value="XM_006718509.3"/>
</dbReference>
<dbReference type="RefSeq" id="XP_006718573.1">
    <property type="nucleotide sequence ID" value="XM_006718510.3"/>
</dbReference>
<dbReference type="RefSeq" id="XP_011543245.1">
    <property type="nucleotide sequence ID" value="XM_011544943.2"/>
</dbReference>
<dbReference type="RefSeq" id="XP_011543246.1">
    <property type="nucleotide sequence ID" value="XM_011544944.2"/>
</dbReference>
<dbReference type="RefSeq" id="XP_011543251.1">
    <property type="nucleotide sequence ID" value="XM_011544949.2"/>
</dbReference>
<dbReference type="RefSeq" id="XP_016873052.1">
    <property type="nucleotide sequence ID" value="XM_017017563.1"/>
</dbReference>
<dbReference type="RefSeq" id="XP_016873053.1">
    <property type="nucleotide sequence ID" value="XM_017017564.1"/>
</dbReference>
<dbReference type="RefSeq" id="XP_016873054.1">
    <property type="nucleotide sequence ID" value="XM_017017565.1"/>
</dbReference>
<dbReference type="RefSeq" id="XP_016873055.1">
    <property type="nucleotide sequence ID" value="XM_017017566.1"/>
</dbReference>
<dbReference type="RefSeq" id="XP_016873056.1">
    <property type="nucleotide sequence ID" value="XM_017017567.1"/>
</dbReference>
<dbReference type="RefSeq" id="XP_016873057.1">
    <property type="nucleotide sequence ID" value="XM_017017568.1"/>
</dbReference>
<dbReference type="RefSeq" id="XP_016873058.1">
    <property type="nucleotide sequence ID" value="XM_017017569.1"/>
</dbReference>
<dbReference type="RefSeq" id="XP_016873059.1">
    <property type="nucleotide sequence ID" value="XM_017017570.1"/>
</dbReference>
<dbReference type="RefSeq" id="XP_016873060.1">
    <property type="nucleotide sequence ID" value="XM_017017571.1"/>
</dbReference>
<dbReference type="SMR" id="Q8N413"/>
<dbReference type="BioGRID" id="129470">
    <property type="interactions" value="2"/>
</dbReference>
<dbReference type="FunCoup" id="Q8N413">
    <property type="interactions" value="389"/>
</dbReference>
<dbReference type="STRING" id="9606.ENSP00000381782"/>
<dbReference type="TCDB" id="2.A.29.8.7">
    <property type="family name" value="the mitochondrial carrier (mc) family"/>
</dbReference>
<dbReference type="BioMuta" id="SLC25A45"/>
<dbReference type="DMDM" id="150416125"/>
<dbReference type="MassIVE" id="Q8N413"/>
<dbReference type="PaxDb" id="9606-ENSP00000381782"/>
<dbReference type="PeptideAtlas" id="Q8N413"/>
<dbReference type="ProteomicsDB" id="71861">
    <molecule id="Q8N413-1"/>
</dbReference>
<dbReference type="ProteomicsDB" id="71862">
    <molecule id="Q8N413-2"/>
</dbReference>
<dbReference type="Antibodypedia" id="7360">
    <property type="antibodies" value="41 antibodies from 19 providers"/>
</dbReference>
<dbReference type="DNASU" id="283130"/>
<dbReference type="Ensembl" id="ENST00000294187.10">
    <molecule id="Q8N413-2"/>
    <property type="protein sequence ID" value="ENSP00000294187.6"/>
    <property type="gene ID" value="ENSG00000162241.13"/>
</dbReference>
<dbReference type="Ensembl" id="ENST00000398802.6">
    <molecule id="Q8N413-1"/>
    <property type="protein sequence ID" value="ENSP00000381782.1"/>
    <property type="gene ID" value="ENSG00000162241.13"/>
</dbReference>
<dbReference type="Ensembl" id="ENST00000527174.5">
    <molecule id="Q8N413-1"/>
    <property type="protein sequence ID" value="ENSP00000435489.1"/>
    <property type="gene ID" value="ENSG00000162241.13"/>
</dbReference>
<dbReference type="Ensembl" id="ENST00000534028.5">
    <molecule id="Q8N413-4"/>
    <property type="protein sequence ID" value="ENSP00000431769.1"/>
    <property type="gene ID" value="ENSG00000162241.13"/>
</dbReference>
<dbReference type="GeneID" id="283130"/>
<dbReference type="KEGG" id="hsa:283130"/>
<dbReference type="MANE-Select" id="ENST00000398802.6">
    <property type="protein sequence ID" value="ENSP00000381782.1"/>
    <property type="RefSeq nucleotide sequence ID" value="NM_182556.4"/>
    <property type="RefSeq protein sequence ID" value="NP_872362.4"/>
</dbReference>
<dbReference type="UCSC" id="uc001odq.3">
    <molecule id="Q8N413-1"/>
    <property type="organism name" value="human"/>
</dbReference>
<dbReference type="AGR" id="HGNC:27442"/>
<dbReference type="CTD" id="283130"/>
<dbReference type="DisGeNET" id="283130"/>
<dbReference type="GeneCards" id="SLC25A45"/>
<dbReference type="HGNC" id="HGNC:27442">
    <property type="gene designation" value="SLC25A45"/>
</dbReference>
<dbReference type="HPA" id="ENSG00000162241">
    <property type="expression patterns" value="Tissue enhanced (pancreas)"/>
</dbReference>
<dbReference type="MIM" id="610825">
    <property type="type" value="gene"/>
</dbReference>
<dbReference type="neXtProt" id="NX_Q8N413"/>
<dbReference type="OpenTargets" id="ENSG00000162241"/>
<dbReference type="PharmGKB" id="PA162403718"/>
<dbReference type="VEuPathDB" id="HostDB:ENSG00000162241"/>
<dbReference type="eggNOG" id="KOG0758">
    <property type="taxonomic scope" value="Eukaryota"/>
</dbReference>
<dbReference type="GeneTree" id="ENSGT00940000161002"/>
<dbReference type="InParanoid" id="Q8N413"/>
<dbReference type="OMA" id="WVTATPF"/>
<dbReference type="OrthoDB" id="193856at2759"/>
<dbReference type="PAN-GO" id="Q8N413">
    <property type="GO annotations" value="3 GO annotations based on evolutionary models"/>
</dbReference>
<dbReference type="PhylomeDB" id="Q8N413"/>
<dbReference type="TreeFam" id="TF351739"/>
<dbReference type="PathwayCommons" id="Q8N413"/>
<dbReference type="BioGRID-ORCS" id="283130">
    <property type="hits" value="17 hits in 1151 CRISPR screens"/>
</dbReference>
<dbReference type="ChiTaRS" id="SLC25A45">
    <property type="organism name" value="human"/>
</dbReference>
<dbReference type="GenomeRNAi" id="283130"/>
<dbReference type="Pharos" id="Q8N413">
    <property type="development level" value="Tdark"/>
</dbReference>
<dbReference type="PRO" id="PR:Q8N413"/>
<dbReference type="Proteomes" id="UP000005640">
    <property type="component" value="Chromosome 11"/>
</dbReference>
<dbReference type="RNAct" id="Q8N413">
    <property type="molecule type" value="protein"/>
</dbReference>
<dbReference type="Bgee" id="ENSG00000162241">
    <property type="expression patterns" value="Expressed in body of pancreas and 135 other cell types or tissues"/>
</dbReference>
<dbReference type="ExpressionAtlas" id="Q8N413">
    <property type="expression patterns" value="baseline and differential"/>
</dbReference>
<dbReference type="GO" id="GO:0005743">
    <property type="term" value="C:mitochondrial inner membrane"/>
    <property type="evidence" value="ECO:0007669"/>
    <property type="project" value="UniProtKB-SubCell"/>
</dbReference>
<dbReference type="GO" id="GO:0005739">
    <property type="term" value="C:mitochondrion"/>
    <property type="evidence" value="ECO:0000318"/>
    <property type="project" value="GO_Central"/>
</dbReference>
<dbReference type="GO" id="GO:0022857">
    <property type="term" value="F:transmembrane transporter activity"/>
    <property type="evidence" value="ECO:0000318"/>
    <property type="project" value="GO_Central"/>
</dbReference>
<dbReference type="FunFam" id="1.50.40.10:FF:000049">
    <property type="entry name" value="Solute carrier family 25 member 45"/>
    <property type="match status" value="1"/>
</dbReference>
<dbReference type="Gene3D" id="1.50.40.10">
    <property type="entry name" value="Mitochondrial carrier domain"/>
    <property type="match status" value="1"/>
</dbReference>
<dbReference type="InterPro" id="IPR002067">
    <property type="entry name" value="Mit_carrier"/>
</dbReference>
<dbReference type="InterPro" id="IPR050567">
    <property type="entry name" value="Mitochondrial_Carrier"/>
</dbReference>
<dbReference type="InterPro" id="IPR018108">
    <property type="entry name" value="Mitochondrial_sb/sol_carrier"/>
</dbReference>
<dbReference type="InterPro" id="IPR023395">
    <property type="entry name" value="Mt_carrier_dom_sf"/>
</dbReference>
<dbReference type="PANTHER" id="PTHR45624">
    <property type="entry name" value="MITOCHONDRIAL BASIC AMINO ACIDS TRANSPORTER-RELATED"/>
    <property type="match status" value="1"/>
</dbReference>
<dbReference type="PANTHER" id="PTHR45624:SF6">
    <property type="entry name" value="SOLUTE CARRIER FAMILY 25 MEMBER 45"/>
    <property type="match status" value="1"/>
</dbReference>
<dbReference type="Pfam" id="PF00153">
    <property type="entry name" value="Mito_carr"/>
    <property type="match status" value="3"/>
</dbReference>
<dbReference type="PRINTS" id="PR00926">
    <property type="entry name" value="MITOCARRIER"/>
</dbReference>
<dbReference type="SUPFAM" id="SSF103506">
    <property type="entry name" value="Mitochondrial carrier"/>
    <property type="match status" value="1"/>
</dbReference>
<dbReference type="PROSITE" id="PS50920">
    <property type="entry name" value="SOLCAR"/>
    <property type="match status" value="3"/>
</dbReference>
<name>S2545_HUMAN</name>
<reference key="1">
    <citation type="submission" date="2004-04" db="EMBL/GenBank/DDBJ databases">
        <authorList>
            <person name="Lin L."/>
            <person name="Zhong G."/>
            <person name="Ke R."/>
            <person name="Li H."/>
            <person name="Zhou G."/>
            <person name="Shen C."/>
            <person name="Yang S."/>
        </authorList>
    </citation>
    <scope>NUCLEOTIDE SEQUENCE [MRNA] (ISOFORM 3)</scope>
    <scope>VARIANT VAL-224</scope>
</reference>
<reference key="2">
    <citation type="journal article" date="2006" name="Nature">
        <title>Human chromosome 11 DNA sequence and analysis including novel gene identification.</title>
        <authorList>
            <person name="Taylor T.D."/>
            <person name="Noguchi H."/>
            <person name="Totoki Y."/>
            <person name="Toyoda A."/>
            <person name="Kuroki Y."/>
            <person name="Dewar K."/>
            <person name="Lloyd C."/>
            <person name="Itoh T."/>
            <person name="Takeda T."/>
            <person name="Kim D.-W."/>
            <person name="She X."/>
            <person name="Barlow K.F."/>
            <person name="Bloom T."/>
            <person name="Bruford E."/>
            <person name="Chang J.L."/>
            <person name="Cuomo C.A."/>
            <person name="Eichler E."/>
            <person name="FitzGerald M.G."/>
            <person name="Jaffe D.B."/>
            <person name="LaButti K."/>
            <person name="Nicol R."/>
            <person name="Park H.-S."/>
            <person name="Seaman C."/>
            <person name="Sougnez C."/>
            <person name="Yang X."/>
            <person name="Zimmer A.R."/>
            <person name="Zody M.C."/>
            <person name="Birren B.W."/>
            <person name="Nusbaum C."/>
            <person name="Fujiyama A."/>
            <person name="Hattori M."/>
            <person name="Rogers J."/>
            <person name="Lander E.S."/>
            <person name="Sakaki Y."/>
        </authorList>
    </citation>
    <scope>NUCLEOTIDE SEQUENCE [LARGE SCALE GENOMIC DNA]</scope>
</reference>
<reference key="3">
    <citation type="journal article" date="2004" name="Genome Res.">
        <title>The status, quality, and expansion of the NIH full-length cDNA project: the Mammalian Gene Collection (MGC).</title>
        <authorList>
            <consortium name="The MGC Project Team"/>
        </authorList>
    </citation>
    <scope>NUCLEOTIDE SEQUENCE [LARGE SCALE MRNA] (ISOFORMS 2 AND 4)</scope>
    <scope>VARIANT VAL-224</scope>
    <source>
        <tissue>Pancreas</tissue>
        <tissue>Prostate</tissue>
    </source>
</reference>
<reference key="4">
    <citation type="journal article" date="2006" name="Genomics">
        <title>Fourteen novel human members of mitochondrial solute carrier family 25 (SLC25) widely expressed in the central nervous system.</title>
        <authorList>
            <person name="Haitina T."/>
            <person name="Lindblom J."/>
            <person name="Renstroem T."/>
            <person name="Fredriksson R."/>
        </authorList>
    </citation>
    <scope>IDENTIFICATION</scope>
</reference>
<accession>Q8N413</accession>
<accession>Q6PL49</accession>
<accession>Q8IW29</accession>